<sequence length="324" mass="36470">MAELEFEKPVVELRNKIRELKDYTKNSQMDFSEEIRILEDKLENLEEDIYGNMKVWDRVQIARHAERPTTLDYIEHLFTDFFECHGDRLFGDDAAIVGGIAKYKGMPVTVIGHQRGKDTKENIRRNFGMPHPEGYRKALRLMKQAEKFNRPIICFIDTKGAYPGKAAEERGQSEAIARNLFEMAGLTVPVICIVIGEGGSGGALGLGVGDYIHMLENSTYSVITPEGAAAILWKDAGKAKEAAEAMRITAADLKELGVIDEIIPEAKGGAHRNVLKQSENIDLMLRKTFEQLNGISKDELIEKRYEKYMKIGQVSFSNASIWIK</sequence>
<organism>
    <name type="scientific">Bacillus anthracis</name>
    <dbReference type="NCBI Taxonomy" id="1392"/>
    <lineage>
        <taxon>Bacteria</taxon>
        <taxon>Bacillati</taxon>
        <taxon>Bacillota</taxon>
        <taxon>Bacilli</taxon>
        <taxon>Bacillales</taxon>
        <taxon>Bacillaceae</taxon>
        <taxon>Bacillus</taxon>
        <taxon>Bacillus cereus group</taxon>
    </lineage>
</organism>
<feature type="chain" id="PRO_0000223727" description="Acetyl-coenzyme A carboxylase carboxyl transferase subunit alpha">
    <location>
        <begin position="1"/>
        <end position="324"/>
    </location>
</feature>
<feature type="domain" description="CoA carboxyltransferase C-terminal" evidence="2">
    <location>
        <begin position="37"/>
        <end position="291"/>
    </location>
</feature>
<accession>Q81KY9</accession>
<accession>Q6HSE6</accession>
<accession>Q6KLP1</accession>
<proteinExistence type="inferred from homology"/>
<dbReference type="EC" id="2.1.3.15" evidence="1"/>
<dbReference type="EMBL" id="AE016879">
    <property type="protein sequence ID" value="AAP28534.1"/>
    <property type="molecule type" value="Genomic_DNA"/>
</dbReference>
<dbReference type="EMBL" id="AE017334">
    <property type="protein sequence ID" value="AAT33964.1"/>
    <property type="molecule type" value="Genomic_DNA"/>
</dbReference>
<dbReference type="EMBL" id="AE017225">
    <property type="protein sequence ID" value="AAT56792.1"/>
    <property type="molecule type" value="Genomic_DNA"/>
</dbReference>
<dbReference type="RefSeq" id="NP_847048.1">
    <property type="nucleotide sequence ID" value="NC_003997.3"/>
</dbReference>
<dbReference type="RefSeq" id="WP_000818794.1">
    <property type="nucleotide sequence ID" value="NZ_WXXJ01000026.1"/>
</dbReference>
<dbReference type="RefSeq" id="YP_030742.1">
    <property type="nucleotide sequence ID" value="NC_005945.1"/>
</dbReference>
<dbReference type="SMR" id="Q81KY9"/>
<dbReference type="STRING" id="261594.GBAA_4845"/>
<dbReference type="DNASU" id="1083998"/>
<dbReference type="GeneID" id="75087757"/>
<dbReference type="KEGG" id="ban:BA_4845"/>
<dbReference type="KEGG" id="bar:GBAA_4845"/>
<dbReference type="KEGG" id="bat:BAS4494"/>
<dbReference type="PATRIC" id="fig|198094.11.peg.4806"/>
<dbReference type="eggNOG" id="COG0825">
    <property type="taxonomic scope" value="Bacteria"/>
</dbReference>
<dbReference type="HOGENOM" id="CLU_015486_0_2_9"/>
<dbReference type="OMA" id="RNFGMAN"/>
<dbReference type="OrthoDB" id="9808023at2"/>
<dbReference type="UniPathway" id="UPA00655">
    <property type="reaction ID" value="UER00711"/>
</dbReference>
<dbReference type="Proteomes" id="UP000000427">
    <property type="component" value="Chromosome"/>
</dbReference>
<dbReference type="Proteomes" id="UP000000594">
    <property type="component" value="Chromosome"/>
</dbReference>
<dbReference type="GO" id="GO:0009317">
    <property type="term" value="C:acetyl-CoA carboxylase complex"/>
    <property type="evidence" value="ECO:0007669"/>
    <property type="project" value="InterPro"/>
</dbReference>
<dbReference type="GO" id="GO:0003989">
    <property type="term" value="F:acetyl-CoA carboxylase activity"/>
    <property type="evidence" value="ECO:0007669"/>
    <property type="project" value="InterPro"/>
</dbReference>
<dbReference type="GO" id="GO:0005524">
    <property type="term" value="F:ATP binding"/>
    <property type="evidence" value="ECO:0007669"/>
    <property type="project" value="UniProtKB-KW"/>
</dbReference>
<dbReference type="GO" id="GO:0016743">
    <property type="term" value="F:carboxyl- or carbamoyltransferase activity"/>
    <property type="evidence" value="ECO:0007669"/>
    <property type="project" value="UniProtKB-UniRule"/>
</dbReference>
<dbReference type="GO" id="GO:0006633">
    <property type="term" value="P:fatty acid biosynthetic process"/>
    <property type="evidence" value="ECO:0007669"/>
    <property type="project" value="UniProtKB-KW"/>
</dbReference>
<dbReference type="GO" id="GO:2001295">
    <property type="term" value="P:malonyl-CoA biosynthetic process"/>
    <property type="evidence" value="ECO:0007669"/>
    <property type="project" value="UniProtKB-UniRule"/>
</dbReference>
<dbReference type="Gene3D" id="3.90.226.10">
    <property type="entry name" value="2-enoyl-CoA Hydratase, Chain A, domain 1"/>
    <property type="match status" value="1"/>
</dbReference>
<dbReference type="HAMAP" id="MF_00823">
    <property type="entry name" value="AcetylCoA_CT_alpha"/>
    <property type="match status" value="1"/>
</dbReference>
<dbReference type="InterPro" id="IPR001095">
    <property type="entry name" value="Acetyl_CoA_COase_a_su"/>
</dbReference>
<dbReference type="InterPro" id="IPR029045">
    <property type="entry name" value="ClpP/crotonase-like_dom_sf"/>
</dbReference>
<dbReference type="InterPro" id="IPR011763">
    <property type="entry name" value="COA_CT_C"/>
</dbReference>
<dbReference type="NCBIfam" id="TIGR00513">
    <property type="entry name" value="accA"/>
    <property type="match status" value="1"/>
</dbReference>
<dbReference type="NCBIfam" id="NF041504">
    <property type="entry name" value="AccA_sub"/>
    <property type="match status" value="1"/>
</dbReference>
<dbReference type="NCBIfam" id="NF004344">
    <property type="entry name" value="PRK05724.1"/>
    <property type="match status" value="1"/>
</dbReference>
<dbReference type="PANTHER" id="PTHR42853">
    <property type="entry name" value="ACETYL-COENZYME A CARBOXYLASE CARBOXYL TRANSFERASE SUBUNIT ALPHA"/>
    <property type="match status" value="1"/>
</dbReference>
<dbReference type="PANTHER" id="PTHR42853:SF3">
    <property type="entry name" value="ACETYL-COENZYME A CARBOXYLASE CARBOXYL TRANSFERASE SUBUNIT ALPHA, CHLOROPLASTIC"/>
    <property type="match status" value="1"/>
</dbReference>
<dbReference type="Pfam" id="PF03255">
    <property type="entry name" value="ACCA"/>
    <property type="match status" value="1"/>
</dbReference>
<dbReference type="PRINTS" id="PR01069">
    <property type="entry name" value="ACCCTRFRASEA"/>
</dbReference>
<dbReference type="SUPFAM" id="SSF52096">
    <property type="entry name" value="ClpP/crotonase"/>
    <property type="match status" value="1"/>
</dbReference>
<dbReference type="PROSITE" id="PS50989">
    <property type="entry name" value="COA_CT_CTER"/>
    <property type="match status" value="1"/>
</dbReference>
<gene>
    <name evidence="1" type="primary">accA</name>
    <name type="ordered locus">BA_4845</name>
    <name type="ordered locus">GBAA_4845</name>
    <name type="ordered locus">BAS4494</name>
</gene>
<protein>
    <recommendedName>
        <fullName evidence="1">Acetyl-coenzyme A carboxylase carboxyl transferase subunit alpha</fullName>
        <shortName evidence="1">ACCase subunit alpha</shortName>
        <shortName evidence="1">Acetyl-CoA carboxylase carboxyltransferase subunit alpha</shortName>
        <ecNumber evidence="1">2.1.3.15</ecNumber>
    </recommendedName>
</protein>
<comment type="function">
    <text evidence="1">Component of the acetyl coenzyme A carboxylase (ACC) complex. First, biotin carboxylase catalyzes the carboxylation of biotin on its carrier protein (BCCP) and then the CO(2) group is transferred by the carboxyltransferase to acetyl-CoA to form malonyl-CoA.</text>
</comment>
<comment type="catalytic activity">
    <reaction evidence="1">
        <text>N(6)-carboxybiotinyl-L-lysyl-[protein] + acetyl-CoA = N(6)-biotinyl-L-lysyl-[protein] + malonyl-CoA</text>
        <dbReference type="Rhea" id="RHEA:54728"/>
        <dbReference type="Rhea" id="RHEA-COMP:10505"/>
        <dbReference type="Rhea" id="RHEA-COMP:10506"/>
        <dbReference type="ChEBI" id="CHEBI:57288"/>
        <dbReference type="ChEBI" id="CHEBI:57384"/>
        <dbReference type="ChEBI" id="CHEBI:83144"/>
        <dbReference type="ChEBI" id="CHEBI:83145"/>
        <dbReference type="EC" id="2.1.3.15"/>
    </reaction>
</comment>
<comment type="pathway">
    <text evidence="1">Lipid metabolism; malonyl-CoA biosynthesis; malonyl-CoA from acetyl-CoA: step 1/1.</text>
</comment>
<comment type="subunit">
    <text evidence="1">Acetyl-CoA carboxylase is a heterohexamer composed of biotin carboxyl carrier protein (AccB), biotin carboxylase (AccC) and two subunits each of ACCase subunit alpha (AccA) and ACCase subunit beta (AccD).</text>
</comment>
<comment type="subcellular location">
    <subcellularLocation>
        <location evidence="1">Cytoplasm</location>
    </subcellularLocation>
</comment>
<comment type="similarity">
    <text evidence="1">Belongs to the AccA family.</text>
</comment>
<reference key="1">
    <citation type="journal article" date="2003" name="Nature">
        <title>The genome sequence of Bacillus anthracis Ames and comparison to closely related bacteria.</title>
        <authorList>
            <person name="Read T.D."/>
            <person name="Peterson S.N."/>
            <person name="Tourasse N.J."/>
            <person name="Baillie L.W."/>
            <person name="Paulsen I.T."/>
            <person name="Nelson K.E."/>
            <person name="Tettelin H."/>
            <person name="Fouts D.E."/>
            <person name="Eisen J.A."/>
            <person name="Gill S.R."/>
            <person name="Holtzapple E.K."/>
            <person name="Okstad O.A."/>
            <person name="Helgason E."/>
            <person name="Rilstone J."/>
            <person name="Wu M."/>
            <person name="Kolonay J.F."/>
            <person name="Beanan M.J."/>
            <person name="Dodson R.J."/>
            <person name="Brinkac L.M."/>
            <person name="Gwinn M.L."/>
            <person name="DeBoy R.T."/>
            <person name="Madpu R."/>
            <person name="Daugherty S.C."/>
            <person name="Durkin A.S."/>
            <person name="Haft D.H."/>
            <person name="Nelson W.C."/>
            <person name="Peterson J.D."/>
            <person name="Pop M."/>
            <person name="Khouri H.M."/>
            <person name="Radune D."/>
            <person name="Benton J.L."/>
            <person name="Mahamoud Y."/>
            <person name="Jiang L."/>
            <person name="Hance I.R."/>
            <person name="Weidman J.F."/>
            <person name="Berry K.J."/>
            <person name="Plaut R.D."/>
            <person name="Wolf A.M."/>
            <person name="Watkins K.L."/>
            <person name="Nierman W.C."/>
            <person name="Hazen A."/>
            <person name="Cline R.T."/>
            <person name="Redmond C."/>
            <person name="Thwaite J.E."/>
            <person name="White O."/>
            <person name="Salzberg S.L."/>
            <person name="Thomason B."/>
            <person name="Friedlander A.M."/>
            <person name="Koehler T.M."/>
            <person name="Hanna P.C."/>
            <person name="Kolstoe A.-B."/>
            <person name="Fraser C.M."/>
        </authorList>
    </citation>
    <scope>NUCLEOTIDE SEQUENCE [LARGE SCALE GENOMIC DNA]</scope>
    <source>
        <strain>Ames / isolate Porton</strain>
    </source>
</reference>
<reference key="2">
    <citation type="journal article" date="2009" name="J. Bacteriol.">
        <title>The complete genome sequence of Bacillus anthracis Ames 'Ancestor'.</title>
        <authorList>
            <person name="Ravel J."/>
            <person name="Jiang L."/>
            <person name="Stanley S.T."/>
            <person name="Wilson M.R."/>
            <person name="Decker R.S."/>
            <person name="Read T.D."/>
            <person name="Worsham P."/>
            <person name="Keim P.S."/>
            <person name="Salzberg S.L."/>
            <person name="Fraser-Liggett C.M."/>
            <person name="Rasko D.A."/>
        </authorList>
    </citation>
    <scope>NUCLEOTIDE SEQUENCE [LARGE SCALE GENOMIC DNA]</scope>
    <source>
        <strain>Ames ancestor</strain>
    </source>
</reference>
<reference key="3">
    <citation type="submission" date="2004-01" db="EMBL/GenBank/DDBJ databases">
        <title>Complete genome sequence of Bacillus anthracis Sterne.</title>
        <authorList>
            <person name="Brettin T.S."/>
            <person name="Bruce D."/>
            <person name="Challacombe J.F."/>
            <person name="Gilna P."/>
            <person name="Han C."/>
            <person name="Hill K."/>
            <person name="Hitchcock P."/>
            <person name="Jackson P."/>
            <person name="Keim P."/>
            <person name="Longmire J."/>
            <person name="Lucas S."/>
            <person name="Okinaka R."/>
            <person name="Richardson P."/>
            <person name="Rubin E."/>
            <person name="Tice H."/>
        </authorList>
    </citation>
    <scope>NUCLEOTIDE SEQUENCE [LARGE SCALE GENOMIC DNA]</scope>
    <source>
        <strain>Sterne</strain>
    </source>
</reference>
<evidence type="ECO:0000255" key="1">
    <source>
        <dbReference type="HAMAP-Rule" id="MF_00823"/>
    </source>
</evidence>
<evidence type="ECO:0000255" key="2">
    <source>
        <dbReference type="PROSITE-ProRule" id="PRU01137"/>
    </source>
</evidence>
<name>ACCA_BACAN</name>
<keyword id="KW-0067">ATP-binding</keyword>
<keyword id="KW-0963">Cytoplasm</keyword>
<keyword id="KW-0275">Fatty acid biosynthesis</keyword>
<keyword id="KW-0276">Fatty acid metabolism</keyword>
<keyword id="KW-0444">Lipid biosynthesis</keyword>
<keyword id="KW-0443">Lipid metabolism</keyword>
<keyword id="KW-0547">Nucleotide-binding</keyword>
<keyword id="KW-1185">Reference proteome</keyword>
<keyword id="KW-0808">Transferase</keyword>